<dbReference type="EMBL" id="X75663">
    <property type="protein sequence ID" value="CAA53351.1"/>
    <property type="status" value="ALT_INIT"/>
    <property type="molecule type" value="Genomic_DNA"/>
</dbReference>
<dbReference type="PIR" id="JQ2119">
    <property type="entry name" value="JQ2119"/>
</dbReference>
<dbReference type="PIR" id="JQ2120">
    <property type="entry name" value="JQ2120"/>
</dbReference>
<dbReference type="PIR" id="JQ2121">
    <property type="entry name" value="JQ2121"/>
</dbReference>
<dbReference type="PIR" id="JQ2122">
    <property type="entry name" value="JQ2122"/>
</dbReference>
<dbReference type="SMR" id="Q69606"/>
<dbReference type="GlyCosmos" id="Q69606">
    <property type="glycosylation" value="2 sites, No reported glycans"/>
</dbReference>
<dbReference type="Proteomes" id="UP000007406">
    <property type="component" value="Genome"/>
</dbReference>
<dbReference type="GO" id="GO:0016020">
    <property type="term" value="C:membrane"/>
    <property type="evidence" value="ECO:0007669"/>
    <property type="project" value="UniProtKB-UniRule"/>
</dbReference>
<dbReference type="GO" id="GO:0019031">
    <property type="term" value="C:viral envelope"/>
    <property type="evidence" value="ECO:0007669"/>
    <property type="project" value="UniProtKB-KW"/>
</dbReference>
<dbReference type="GO" id="GO:0055036">
    <property type="term" value="C:virion membrane"/>
    <property type="evidence" value="ECO:0007669"/>
    <property type="project" value="UniProtKB-SubCell"/>
</dbReference>
<dbReference type="GO" id="GO:0075513">
    <property type="term" value="P:caveolin-mediated endocytosis of virus by host cell"/>
    <property type="evidence" value="ECO:0007669"/>
    <property type="project" value="UniProtKB-KW"/>
</dbReference>
<dbReference type="GO" id="GO:0039654">
    <property type="term" value="P:fusion of virus membrane with host endosome membrane"/>
    <property type="evidence" value="ECO:0007669"/>
    <property type="project" value="UniProtKB-KW"/>
</dbReference>
<dbReference type="GO" id="GO:0019062">
    <property type="term" value="P:virion attachment to host cell"/>
    <property type="evidence" value="ECO:0007669"/>
    <property type="project" value="UniProtKB-UniRule"/>
</dbReference>
<dbReference type="HAMAP" id="MF_04075">
    <property type="entry name" value="HBV_HBSAG"/>
    <property type="match status" value="1"/>
</dbReference>
<dbReference type="InterPro" id="IPR000349">
    <property type="entry name" value="HBV_HBSAG"/>
</dbReference>
<dbReference type="Pfam" id="PF00695">
    <property type="entry name" value="vMSA"/>
    <property type="match status" value="1"/>
</dbReference>
<name>HBSAG_HBVF6</name>
<sequence>MGAPLSTTRRGMGQNLSVPNPLGFLPDHQLDPLFRANSSSPDWDFNTNKDSWPMANKVGVGGYGPGFTPPHGGLLGWSPQAQGVLTTLPADPPPASTNRLSGRKPTQVSPPLRDTHPQAMQWNSTHFHQALLDPRVRALYFPAGGSSSGTQNPAPTIASLTSSISSKTGGPAMNMENITSGLLGPLRVLQAVCFLLTKILTIPQSLDSWWTSLNFLGGLPRCPGQNSQSPTSNHLPTSCPPTCPGYRWMCLRRFIIFLFILLLCLIFLLVLLDYQGMLPVCPLLPGSTTTSTGPCKTCTALAQGTSMFPSCCCSKPSDGNCTCIPIPSSWALGKYLWEWASARFSWLSLLVQFVQWCVGLSPTVWLLVIWMIWYWGPNLCSILSPFIPLLPIFCYLWVSI</sequence>
<accession>Q69606</accession>
<keyword id="KW-0007">Acetylation</keyword>
<keyword id="KW-0024">Alternative initiation</keyword>
<keyword id="KW-0025">Alternative splicing</keyword>
<keyword id="KW-1166">Caveolin-mediated endocytosis of virus by host</keyword>
<keyword id="KW-1170">Fusion of virus membrane with host endosomal membrane</keyword>
<keyword id="KW-1168">Fusion of virus membrane with host membrane</keyword>
<keyword id="KW-0325">Glycoprotein</keyword>
<keyword id="KW-0945">Host-virus interaction</keyword>
<keyword id="KW-0449">Lipoprotein</keyword>
<keyword id="KW-0472">Membrane</keyword>
<keyword id="KW-0519">Myristate</keyword>
<keyword id="KW-0812">Transmembrane</keyword>
<keyword id="KW-1133">Transmembrane helix</keyword>
<keyword id="KW-1161">Viral attachment to host cell</keyword>
<keyword id="KW-0261">Viral envelope protein</keyword>
<keyword id="KW-1162">Viral penetration into host cytoplasm</keyword>
<keyword id="KW-0946">Virion</keyword>
<keyword id="KW-1164">Virus endocytosis by host</keyword>
<keyword id="KW-1160">Virus entry into host cell</keyword>
<reference key="1">
    <citation type="journal article" date="1994" name="Virology">
        <title>Complete genomes, phylogenetic relatedness, and structural proteins of six strains of the hepatitis B virus, four of which represent two new genotypes.</title>
        <authorList>
            <person name="Norder H."/>
            <person name="Courouce A.M."/>
            <person name="Magnius L.O."/>
        </authorList>
    </citation>
    <scope>NUCLEOTIDE SEQUENCE [GENOMIC DNA]</scope>
</reference>
<reference key="2">
    <citation type="journal article" date="1996" name="Intervirology">
        <title>Functions of the large hepatitis B virus surface protein in viral particle morphogenesis.</title>
        <authorList>
            <person name="Bruss V."/>
            <person name="Gerhardt E."/>
            <person name="Vieluf K."/>
            <person name="Wunderlich G."/>
        </authorList>
    </citation>
    <scope>REVIEW</scope>
</reference>
<reference key="3">
    <citation type="journal article" date="1998" name="Adv. Exp. Med. Biol.">
        <title>Role of glycan processing in hepatitis B virus envelope protein trafficking.</title>
        <authorList>
            <person name="Block T.M."/>
            <person name="Lu X."/>
            <person name="Mehta A."/>
            <person name="Park J."/>
            <person name="Blumberg B.S."/>
            <person name="Dwek R."/>
        </authorList>
    </citation>
    <scope>REVIEW</scope>
</reference>
<reference key="4">
    <citation type="journal article" date="2004" name="Virus Res.">
        <title>Envelopment of the hepatitis B virus nucleocapsid.</title>
        <authorList>
            <person name="Bruss V."/>
        </authorList>
    </citation>
    <scope>REVIEW</scope>
</reference>
<reference key="5">
    <citation type="journal article" date="2006" name="Cancer Sci.">
        <title>Hepatitis B virus pre-S mutants, endoplasmic reticulum stress and hepatocarcinogenesis.</title>
        <authorList>
            <person name="Wang H.C."/>
            <person name="Huang W."/>
            <person name="Lai M.D."/>
            <person name="Su I.J."/>
        </authorList>
    </citation>
    <scope>REVIEW</scope>
</reference>
<protein>
    <recommendedName>
        <fullName evidence="3">Large envelope protein</fullName>
    </recommendedName>
    <alternativeName>
        <fullName evidence="3">L glycoprotein</fullName>
    </alternativeName>
    <alternativeName>
        <fullName evidence="3">L-HBsAg</fullName>
        <shortName evidence="3">LHB</shortName>
    </alternativeName>
    <alternativeName>
        <fullName evidence="3">Large S protein</fullName>
    </alternativeName>
    <alternativeName>
        <fullName evidence="3">Large surface protein</fullName>
    </alternativeName>
    <alternativeName>
        <fullName evidence="3">Major surface antigen</fullName>
    </alternativeName>
</protein>
<gene>
    <name evidence="3" type="primary">S</name>
</gene>
<organismHost>
    <name type="scientific">Homo sapiens</name>
    <name type="common">Human</name>
    <dbReference type="NCBI Taxonomy" id="9606"/>
</organismHost>
<organismHost>
    <name type="scientific">Pan troglodytes</name>
    <name type="common">Chimpanzee</name>
    <dbReference type="NCBI Taxonomy" id="9598"/>
</organismHost>
<feature type="initiator methionine" description="Removed; by host" evidence="3">
    <location>
        <position position="1"/>
    </location>
</feature>
<feature type="chain" id="PRO_0000319094" description="Large envelope protein" evidence="3">
    <location>
        <begin position="2"/>
        <end position="400"/>
    </location>
</feature>
<feature type="topological domain" description="Intravirion; in internal conformation" evidence="3">
    <location>
        <begin position="2"/>
        <end position="253"/>
    </location>
</feature>
<feature type="topological domain" description="Virion surface; in external conformation" evidence="3">
    <location>
        <begin position="2"/>
        <end position="181"/>
    </location>
</feature>
<feature type="transmembrane region" description="Helical; Name=TM1; Note=In external conformation" evidence="3">
    <location>
        <begin position="182"/>
        <end position="202"/>
    </location>
</feature>
<feature type="topological domain" description="Intravirion; in external conformation" evidence="3">
    <location>
        <begin position="203"/>
        <end position="253"/>
    </location>
</feature>
<feature type="transmembrane region" description="Helical; Name=TM2" evidence="3">
    <location>
        <begin position="254"/>
        <end position="274"/>
    </location>
</feature>
<feature type="topological domain" description="Virion surface" evidence="3">
    <location>
        <begin position="275"/>
        <end position="348"/>
    </location>
</feature>
<feature type="transmembrane region" description="Helical" evidence="3">
    <location>
        <begin position="349"/>
        <end position="369"/>
    </location>
</feature>
<feature type="topological domain" description="Intravirion" evidence="3">
    <location>
        <begin position="370"/>
        <end position="375"/>
    </location>
</feature>
<feature type="transmembrane region" description="Helical; Name=TM3" evidence="3">
    <location>
        <begin position="376"/>
        <end position="398"/>
    </location>
</feature>
<feature type="topological domain" description="Virion surface" evidence="3">
    <location>
        <begin position="399"/>
        <end position="400"/>
    </location>
</feature>
<feature type="region of interest" description="Pre-S" evidence="3">
    <location>
        <begin position="2"/>
        <end position="174"/>
    </location>
</feature>
<feature type="region of interest" description="Pre-S1" evidence="3">
    <location>
        <begin position="2"/>
        <end position="119"/>
    </location>
</feature>
<feature type="region of interest" description="Disordered" evidence="4">
    <location>
        <begin position="84"/>
        <end position="110"/>
    </location>
</feature>
<feature type="region of interest" description="Pre-S2" evidence="3">
    <location>
        <begin position="120"/>
        <end position="174"/>
    </location>
</feature>
<feature type="compositionally biased region" description="Polar residues" evidence="4">
    <location>
        <begin position="96"/>
        <end position="109"/>
    </location>
</feature>
<feature type="lipid moiety-binding region" description="N-myristoyl glycine; by host" evidence="3">
    <location>
        <position position="2"/>
    </location>
</feature>
<feature type="glycosylation site" description="N-linked (GlcNAc...) asparagine; by host" evidence="3">
    <location>
        <position position="320"/>
    </location>
</feature>
<feature type="splice variant" id="VSP_031425" description="In isoform S." evidence="5">
    <location>
        <begin position="1"/>
        <end position="174"/>
    </location>
</feature>
<feature type="splice variant" id="VSP_031426" description="In isoform M." evidence="5">
    <location>
        <begin position="1"/>
        <end position="119"/>
    </location>
</feature>
<feature type="modified residue" description="N-acetylmethionine" evidence="5">
    <location sequence="Q69606-2">
        <position position="1"/>
    </location>
</feature>
<feature type="glycosylation site" description="N-linked (GlcNAc...) asparagine" evidence="5">
    <location sequence="Q69606-2">
        <position position="4"/>
    </location>
</feature>
<evidence type="ECO:0000250" key="1">
    <source>
        <dbReference type="UniProtKB" id="P03138"/>
    </source>
</evidence>
<evidence type="ECO:0000250" key="2">
    <source>
        <dbReference type="UniProtKB" id="P03141"/>
    </source>
</evidence>
<evidence type="ECO:0000255" key="3">
    <source>
        <dbReference type="HAMAP-Rule" id="MF_04075"/>
    </source>
</evidence>
<evidence type="ECO:0000256" key="4">
    <source>
        <dbReference type="SAM" id="MobiDB-lite"/>
    </source>
</evidence>
<evidence type="ECO:0000305" key="5"/>
<organism>
    <name type="scientific">Hepatitis B virus genotype F2 subtype adw4q (isolate Senegal/9203)</name>
    <name type="common">HBV-F</name>
    <dbReference type="NCBI Taxonomy" id="489503"/>
    <lineage>
        <taxon>Viruses</taxon>
        <taxon>Riboviria</taxon>
        <taxon>Pararnavirae</taxon>
        <taxon>Artverviricota</taxon>
        <taxon>Revtraviricetes</taxon>
        <taxon>Blubervirales</taxon>
        <taxon>Hepadnaviridae</taxon>
        <taxon>Orthohepadnavirus</taxon>
        <taxon>Hepatitis B virus</taxon>
        <taxon>hepatitis B virus genotype F</taxon>
    </lineage>
</organism>
<proteinExistence type="evidence at protein level"/>
<comment type="function">
    <text evidence="3">The large envelope protein exists in two topological conformations, one which is termed 'external' or Le-HBsAg and the other 'internal' or Li-HBsAg. In its external conformation the protein attaches the virus to cell receptors and thereby initiating infection. This interaction determines the species specificity and liver tropism. This attachment induces virion internalization predominantly through caveolin-mediated endocytosis. The large envelope protein also assures fusion between virion membrane and endosomal membrane. In its internal conformation the protein plays a role in virion morphogenesis and mediates the contact with the nucleocapsid like a matrix protein.</text>
</comment>
<comment type="function">
    <text evidence="3">The middle envelope protein plays an important role in the budding of the virion. It is involved in the induction of budding in a nucleocapsid independent way. In this process the majority of envelope proteins bud to form subviral lipoprotein particles of 22 nm of diameter that do not contain a nucleocapsid.</text>
</comment>
<comment type="subunit">
    <molecule>Isoform L</molecule>
    <text evidence="2">In its internal form (Li-HBsAg), interacts with the capsid protein and with the isoform S. Interacts with host chaperone CANX.</text>
</comment>
<comment type="subunit">
    <molecule>Isoform M</molecule>
    <text evidence="2">Associates with host chaperone CANX through its pre-S2 N glycan; this association may be essential for isoform M proper secretion.</text>
</comment>
<comment type="subunit">
    <molecule>Isoform S</molecule>
    <text evidence="2">Interacts with isoform L. Interacts with the antigens of satellite virus HDV (HDVAgs); this interaction is required for encapsidation of HDV genomic RNA.</text>
</comment>
<comment type="subcellular location">
    <subcellularLocation>
        <location evidence="3">Virion membrane</location>
    </subcellularLocation>
</comment>
<comment type="alternative products">
    <event type="alternative splicing"/>
    <event type="alternative initiation"/>
    <isoform>
        <id>Q69606-1</id>
        <name>L</name>
        <name>Large envelope protein</name>
        <name>LHB</name>
        <name>L-HBsAg</name>
        <sequence type="displayed"/>
    </isoform>
    <isoform>
        <id>Q69606-2</id>
        <name>M</name>
        <name>Middle envelope protein</name>
        <name>MHB</name>
        <name>M-HBsAg</name>
        <sequence type="described" ref="VSP_031426"/>
    </isoform>
    <isoform>
        <id>Q69606-3</id>
        <name>S</name>
        <name>Small envelope protein</name>
        <name>SHB</name>
        <name>S-HBsAg</name>
        <sequence type="described" ref="VSP_031425"/>
    </isoform>
</comment>
<comment type="domain">
    <text evidence="3">The large envelope protein is synthesized with the pre-S region at the cytosolic side of the endoplasmic reticulum and, hence will be within the virion after budding. Therefore the pre-S region is not N-glycosylated. Later a post-translational translocation of N-terminal pre-S and TM1 domains occur in about 50% of proteins at the virion surface. These molecules change their topology by an unknown mechanism, resulting in exposure of pre-S region at virion surface. For isoform M in contrast, the pre-S2 region is translocated cotranslationally to the endoplasmic reticulum lumen and is N-glycosylated.</text>
</comment>
<comment type="PTM">
    <text evidence="1 3">Isoform M is N-terminally acetylated by host at a ratio of 90%, and N-glycosylated by host at the pre-S2 region.</text>
</comment>
<comment type="PTM">
    <text evidence="3">Myristoylated.</text>
</comment>
<comment type="biotechnology">
    <text>Systematic vaccination of individuals at risk of exposure to the virus has been the main method of controlling the morbidity and mortality associated with hepatitis B. The first hepatitis B vaccine was manufactured by the purification and inactivation of HBsAg obtained from the plasma of chronic hepatitis B virus carriers. The vaccine is now produced by recombinant DNA techniques and expression of the S isoform in yeast cells. The pre-S region do not seem to induce strong enough antigenic response.</text>
</comment>
<comment type="similarity">
    <text evidence="3">Belongs to the orthohepadnavirus major surface antigen family.</text>
</comment>
<comment type="sequence caution" evidence="5">
    <conflict type="erroneous initiation">
        <sequence resource="EMBL-CDS" id="CAA53351"/>
    </conflict>
</comment>